<dbReference type="EC" id="5.3.1.16" evidence="1"/>
<dbReference type="EMBL" id="AM743169">
    <property type="protein sequence ID" value="CAQ45666.1"/>
    <property type="molecule type" value="Genomic_DNA"/>
</dbReference>
<dbReference type="RefSeq" id="WP_012480035.1">
    <property type="nucleotide sequence ID" value="NC_010943.1"/>
</dbReference>
<dbReference type="SMR" id="B2FPM3"/>
<dbReference type="EnsemblBacteria" id="CAQ45666">
    <property type="protein sequence ID" value="CAQ45666"/>
    <property type="gene ID" value="Smlt2167"/>
</dbReference>
<dbReference type="KEGG" id="sml:Smlt2167"/>
<dbReference type="PATRIC" id="fig|522373.3.peg.2060"/>
<dbReference type="eggNOG" id="COG0106">
    <property type="taxonomic scope" value="Bacteria"/>
</dbReference>
<dbReference type="HOGENOM" id="CLU_048577_1_2_6"/>
<dbReference type="UniPathway" id="UPA00031">
    <property type="reaction ID" value="UER00009"/>
</dbReference>
<dbReference type="Proteomes" id="UP000008840">
    <property type="component" value="Chromosome"/>
</dbReference>
<dbReference type="GO" id="GO:0005737">
    <property type="term" value="C:cytoplasm"/>
    <property type="evidence" value="ECO:0007669"/>
    <property type="project" value="UniProtKB-SubCell"/>
</dbReference>
<dbReference type="GO" id="GO:0003949">
    <property type="term" value="F:1-(5-phosphoribosyl)-5-[(5-phosphoribosylamino)methylideneamino]imidazole-4-carboxamide isomerase activity"/>
    <property type="evidence" value="ECO:0007669"/>
    <property type="project" value="UniProtKB-UniRule"/>
</dbReference>
<dbReference type="GO" id="GO:0000105">
    <property type="term" value="P:L-histidine biosynthetic process"/>
    <property type="evidence" value="ECO:0007669"/>
    <property type="project" value="UniProtKB-UniRule"/>
</dbReference>
<dbReference type="GO" id="GO:0000162">
    <property type="term" value="P:L-tryptophan biosynthetic process"/>
    <property type="evidence" value="ECO:0007669"/>
    <property type="project" value="TreeGrafter"/>
</dbReference>
<dbReference type="CDD" id="cd04732">
    <property type="entry name" value="HisA"/>
    <property type="match status" value="1"/>
</dbReference>
<dbReference type="FunFam" id="3.20.20.70:FF:000009">
    <property type="entry name" value="1-(5-phosphoribosyl)-5-[(5-phosphoribosylamino)methylideneamino] imidazole-4-carboxamide isomerase"/>
    <property type="match status" value="1"/>
</dbReference>
<dbReference type="Gene3D" id="3.20.20.70">
    <property type="entry name" value="Aldolase class I"/>
    <property type="match status" value="1"/>
</dbReference>
<dbReference type="HAMAP" id="MF_01014">
    <property type="entry name" value="HisA"/>
    <property type="match status" value="1"/>
</dbReference>
<dbReference type="InterPro" id="IPR013785">
    <property type="entry name" value="Aldolase_TIM"/>
</dbReference>
<dbReference type="InterPro" id="IPR006062">
    <property type="entry name" value="His_biosynth"/>
</dbReference>
<dbReference type="InterPro" id="IPR006063">
    <property type="entry name" value="HisA_bact_arch"/>
</dbReference>
<dbReference type="InterPro" id="IPR044524">
    <property type="entry name" value="Isoase_HisA-like"/>
</dbReference>
<dbReference type="InterPro" id="IPR023016">
    <property type="entry name" value="Isoase_HisA-like_bact"/>
</dbReference>
<dbReference type="InterPro" id="IPR011060">
    <property type="entry name" value="RibuloseP-bd_barrel"/>
</dbReference>
<dbReference type="NCBIfam" id="TIGR00007">
    <property type="entry name" value="1-(5-phosphoribosyl)-5-[(5-phosphoribosylamino)methylideneamino]imidazole-4-carboxamide isomerase"/>
    <property type="match status" value="1"/>
</dbReference>
<dbReference type="PANTHER" id="PTHR43090">
    <property type="entry name" value="1-(5-PHOSPHORIBOSYL)-5-[(5-PHOSPHORIBOSYLAMINO)METHYLIDENEAMINO] IMIDAZOLE-4-CARBOXAMIDE ISOMERASE"/>
    <property type="match status" value="1"/>
</dbReference>
<dbReference type="PANTHER" id="PTHR43090:SF2">
    <property type="entry name" value="1-(5-PHOSPHORIBOSYL)-5-[(5-PHOSPHORIBOSYLAMINO)METHYLIDENEAMINO] IMIDAZOLE-4-CARBOXAMIDE ISOMERASE"/>
    <property type="match status" value="1"/>
</dbReference>
<dbReference type="Pfam" id="PF00977">
    <property type="entry name" value="His_biosynth"/>
    <property type="match status" value="1"/>
</dbReference>
<dbReference type="SUPFAM" id="SSF51366">
    <property type="entry name" value="Ribulose-phoshate binding barrel"/>
    <property type="match status" value="1"/>
</dbReference>
<gene>
    <name evidence="1" type="primary">hisA</name>
    <name type="ordered locus">Smlt2167</name>
</gene>
<evidence type="ECO:0000255" key="1">
    <source>
        <dbReference type="HAMAP-Rule" id="MF_01014"/>
    </source>
</evidence>
<name>HIS4_STRMK</name>
<sequence>MSFIVYPALDIRDGRVVRLRQGDYAQETSYGDDALPRAQALAAQGAQWMHLVDLDAARAGGYTLAPLLASIRAQTPLQVQTGGGVRGRDDVARILDAGAGRVVVGSLAVRRPDEVVGWLEEFGAERITIALDARQDAQGQWQLPVHGWTENAGVTLDVLAQRYARAGMRHLLCTDIARDGMLAGPNISLYQHLSALLPGVAVQASGGIRDVADVAEARRAGCGGAILGKALLEQRMDLAEALAC</sequence>
<comment type="catalytic activity">
    <reaction evidence="1">
        <text>1-(5-phospho-beta-D-ribosyl)-5-[(5-phospho-beta-D-ribosylamino)methylideneamino]imidazole-4-carboxamide = 5-[(5-phospho-1-deoxy-D-ribulos-1-ylimino)methylamino]-1-(5-phospho-beta-D-ribosyl)imidazole-4-carboxamide</text>
        <dbReference type="Rhea" id="RHEA:15469"/>
        <dbReference type="ChEBI" id="CHEBI:58435"/>
        <dbReference type="ChEBI" id="CHEBI:58525"/>
        <dbReference type="EC" id="5.3.1.16"/>
    </reaction>
</comment>
<comment type="pathway">
    <text evidence="1">Amino-acid biosynthesis; L-histidine biosynthesis; L-histidine from 5-phospho-alpha-D-ribose 1-diphosphate: step 4/9.</text>
</comment>
<comment type="subcellular location">
    <subcellularLocation>
        <location evidence="1">Cytoplasm</location>
    </subcellularLocation>
</comment>
<comment type="similarity">
    <text evidence="1">Belongs to the HisA/HisF family.</text>
</comment>
<feature type="chain" id="PRO_1000190560" description="1-(5-phosphoribosyl)-5-[(5-phosphoribosylamino)methylideneamino] imidazole-4-carboxamide isomerase">
    <location>
        <begin position="1"/>
        <end position="244"/>
    </location>
</feature>
<feature type="active site" description="Proton acceptor" evidence="1">
    <location>
        <position position="10"/>
    </location>
</feature>
<feature type="active site" description="Proton donor" evidence="1">
    <location>
        <position position="132"/>
    </location>
</feature>
<keyword id="KW-0028">Amino-acid biosynthesis</keyword>
<keyword id="KW-0963">Cytoplasm</keyword>
<keyword id="KW-0368">Histidine biosynthesis</keyword>
<keyword id="KW-0413">Isomerase</keyword>
<keyword id="KW-1185">Reference proteome</keyword>
<protein>
    <recommendedName>
        <fullName evidence="1">1-(5-phosphoribosyl)-5-[(5-phosphoribosylamino)methylideneamino] imidazole-4-carboxamide isomerase</fullName>
        <ecNumber evidence="1">5.3.1.16</ecNumber>
    </recommendedName>
    <alternativeName>
        <fullName evidence="1">Phosphoribosylformimino-5-aminoimidazole carboxamide ribotide isomerase</fullName>
    </alternativeName>
</protein>
<proteinExistence type="inferred from homology"/>
<accession>B2FPM3</accession>
<organism>
    <name type="scientific">Stenotrophomonas maltophilia (strain K279a)</name>
    <dbReference type="NCBI Taxonomy" id="522373"/>
    <lineage>
        <taxon>Bacteria</taxon>
        <taxon>Pseudomonadati</taxon>
        <taxon>Pseudomonadota</taxon>
        <taxon>Gammaproteobacteria</taxon>
        <taxon>Lysobacterales</taxon>
        <taxon>Lysobacteraceae</taxon>
        <taxon>Stenotrophomonas</taxon>
        <taxon>Stenotrophomonas maltophilia group</taxon>
    </lineage>
</organism>
<reference key="1">
    <citation type="journal article" date="2008" name="Genome Biol.">
        <title>The complete genome, comparative and functional analysis of Stenotrophomonas maltophilia reveals an organism heavily shielded by drug resistance determinants.</title>
        <authorList>
            <person name="Crossman L.C."/>
            <person name="Gould V.C."/>
            <person name="Dow J.M."/>
            <person name="Vernikos G.S."/>
            <person name="Okazaki A."/>
            <person name="Sebaihia M."/>
            <person name="Saunders D."/>
            <person name="Arrowsmith C."/>
            <person name="Carver T."/>
            <person name="Peters N."/>
            <person name="Adlem E."/>
            <person name="Kerhornou A."/>
            <person name="Lord A."/>
            <person name="Murphy L."/>
            <person name="Seeger K."/>
            <person name="Squares R."/>
            <person name="Rutter S."/>
            <person name="Quail M.A."/>
            <person name="Rajandream M.A."/>
            <person name="Harris D."/>
            <person name="Churcher C."/>
            <person name="Bentley S.D."/>
            <person name="Parkhill J."/>
            <person name="Thomson N.R."/>
            <person name="Avison M.B."/>
        </authorList>
    </citation>
    <scope>NUCLEOTIDE SEQUENCE [LARGE SCALE GENOMIC DNA]</scope>
    <source>
        <strain>K279a</strain>
    </source>
</reference>